<organism>
    <name type="scientific">Pseudomonas aeruginosa (strain UCBPP-PA14)</name>
    <dbReference type="NCBI Taxonomy" id="208963"/>
    <lineage>
        <taxon>Bacteria</taxon>
        <taxon>Pseudomonadati</taxon>
        <taxon>Pseudomonadota</taxon>
        <taxon>Gammaproteobacteria</taxon>
        <taxon>Pseudomonadales</taxon>
        <taxon>Pseudomonadaceae</taxon>
        <taxon>Pseudomonas</taxon>
    </lineage>
</organism>
<name>DPO4_PSEAB</name>
<feature type="chain" id="PRO_1000084912" description="DNA polymerase IV">
    <location>
        <begin position="1"/>
        <end position="349"/>
    </location>
</feature>
<feature type="domain" description="UmuC" evidence="1">
    <location>
        <begin position="4"/>
        <end position="185"/>
    </location>
</feature>
<feature type="active site" evidence="1">
    <location>
        <position position="104"/>
    </location>
</feature>
<feature type="binding site" evidence="1">
    <location>
        <position position="8"/>
    </location>
    <ligand>
        <name>Mg(2+)</name>
        <dbReference type="ChEBI" id="CHEBI:18420"/>
    </ligand>
</feature>
<feature type="binding site" evidence="1">
    <location>
        <position position="103"/>
    </location>
    <ligand>
        <name>Mg(2+)</name>
        <dbReference type="ChEBI" id="CHEBI:18420"/>
    </ligand>
</feature>
<feature type="site" description="Substrate discrimination" evidence="1">
    <location>
        <position position="13"/>
    </location>
</feature>
<keyword id="KW-0963">Cytoplasm</keyword>
<keyword id="KW-0227">DNA damage</keyword>
<keyword id="KW-0234">DNA repair</keyword>
<keyword id="KW-0235">DNA replication</keyword>
<keyword id="KW-0238">DNA-binding</keyword>
<keyword id="KW-0239">DNA-directed DNA polymerase</keyword>
<keyword id="KW-0460">Magnesium</keyword>
<keyword id="KW-0479">Metal-binding</keyword>
<keyword id="KW-0515">Mutator protein</keyword>
<keyword id="KW-0548">Nucleotidyltransferase</keyword>
<keyword id="KW-0808">Transferase</keyword>
<protein>
    <recommendedName>
        <fullName evidence="1">DNA polymerase IV</fullName>
        <shortName evidence="1">Pol IV</shortName>
        <ecNumber evidence="1">2.7.7.7</ecNumber>
    </recommendedName>
</protein>
<accession>Q02I83</accession>
<gene>
    <name evidence="1" type="primary">dinB</name>
    <name type="ordered locus">PA14_52310</name>
</gene>
<evidence type="ECO:0000255" key="1">
    <source>
        <dbReference type="HAMAP-Rule" id="MF_01113"/>
    </source>
</evidence>
<reference key="1">
    <citation type="journal article" date="2006" name="Genome Biol.">
        <title>Genomic analysis reveals that Pseudomonas aeruginosa virulence is combinatorial.</title>
        <authorList>
            <person name="Lee D.G."/>
            <person name="Urbach J.M."/>
            <person name="Wu G."/>
            <person name="Liberati N.T."/>
            <person name="Feinbaum R.L."/>
            <person name="Miyata S."/>
            <person name="Diggins L.T."/>
            <person name="He J."/>
            <person name="Saucier M."/>
            <person name="Deziel E."/>
            <person name="Friedman L."/>
            <person name="Li L."/>
            <person name="Grills G."/>
            <person name="Montgomery K."/>
            <person name="Kucherlapati R."/>
            <person name="Rahme L.G."/>
            <person name="Ausubel F.M."/>
        </authorList>
    </citation>
    <scope>NUCLEOTIDE SEQUENCE [LARGE SCALE GENOMIC DNA]</scope>
    <source>
        <strain>UCBPP-PA14</strain>
    </source>
</reference>
<proteinExistence type="inferred from homology"/>
<dbReference type="EC" id="2.7.7.7" evidence="1"/>
<dbReference type="EMBL" id="CP000438">
    <property type="protein sequence ID" value="ABJ10082.1"/>
    <property type="molecule type" value="Genomic_DNA"/>
</dbReference>
<dbReference type="RefSeq" id="WP_003086018.1">
    <property type="nucleotide sequence ID" value="NZ_CP034244.1"/>
</dbReference>
<dbReference type="SMR" id="Q02I83"/>
<dbReference type="KEGG" id="pau:PA14_52310"/>
<dbReference type="PseudoCAP" id="PA14_52310"/>
<dbReference type="HOGENOM" id="CLU_012348_1_2_6"/>
<dbReference type="BioCyc" id="PAER208963:G1G74-4402-MONOMER"/>
<dbReference type="Proteomes" id="UP000000653">
    <property type="component" value="Chromosome"/>
</dbReference>
<dbReference type="GO" id="GO:0005829">
    <property type="term" value="C:cytosol"/>
    <property type="evidence" value="ECO:0007669"/>
    <property type="project" value="TreeGrafter"/>
</dbReference>
<dbReference type="GO" id="GO:0003684">
    <property type="term" value="F:damaged DNA binding"/>
    <property type="evidence" value="ECO:0007669"/>
    <property type="project" value="InterPro"/>
</dbReference>
<dbReference type="GO" id="GO:0003887">
    <property type="term" value="F:DNA-directed DNA polymerase activity"/>
    <property type="evidence" value="ECO:0007669"/>
    <property type="project" value="UniProtKB-UniRule"/>
</dbReference>
<dbReference type="GO" id="GO:0000287">
    <property type="term" value="F:magnesium ion binding"/>
    <property type="evidence" value="ECO:0007669"/>
    <property type="project" value="UniProtKB-UniRule"/>
</dbReference>
<dbReference type="GO" id="GO:0006261">
    <property type="term" value="P:DNA-templated DNA replication"/>
    <property type="evidence" value="ECO:0007669"/>
    <property type="project" value="UniProtKB-UniRule"/>
</dbReference>
<dbReference type="GO" id="GO:0042276">
    <property type="term" value="P:error-prone translesion synthesis"/>
    <property type="evidence" value="ECO:0007669"/>
    <property type="project" value="TreeGrafter"/>
</dbReference>
<dbReference type="GO" id="GO:0009432">
    <property type="term" value="P:SOS response"/>
    <property type="evidence" value="ECO:0007669"/>
    <property type="project" value="TreeGrafter"/>
</dbReference>
<dbReference type="CDD" id="cd03586">
    <property type="entry name" value="PolY_Pol_IV_kappa"/>
    <property type="match status" value="1"/>
</dbReference>
<dbReference type="FunFam" id="1.10.150.20:FF:000019">
    <property type="entry name" value="DNA polymerase IV"/>
    <property type="match status" value="1"/>
</dbReference>
<dbReference type="FunFam" id="3.30.1490.100:FF:000011">
    <property type="entry name" value="DNA polymerase IV"/>
    <property type="match status" value="1"/>
</dbReference>
<dbReference type="FunFam" id="3.30.70.270:FF:000002">
    <property type="entry name" value="DNA polymerase IV"/>
    <property type="match status" value="1"/>
</dbReference>
<dbReference type="FunFam" id="3.40.1170.60:FF:000001">
    <property type="entry name" value="DNA polymerase IV"/>
    <property type="match status" value="1"/>
</dbReference>
<dbReference type="Gene3D" id="3.30.70.270">
    <property type="match status" value="1"/>
</dbReference>
<dbReference type="Gene3D" id="3.40.1170.60">
    <property type="match status" value="1"/>
</dbReference>
<dbReference type="Gene3D" id="1.10.150.20">
    <property type="entry name" value="5' to 3' exonuclease, C-terminal subdomain"/>
    <property type="match status" value="1"/>
</dbReference>
<dbReference type="Gene3D" id="3.30.1490.100">
    <property type="entry name" value="DNA polymerase, Y-family, little finger domain"/>
    <property type="match status" value="1"/>
</dbReference>
<dbReference type="HAMAP" id="MF_01113">
    <property type="entry name" value="DNApol_IV"/>
    <property type="match status" value="1"/>
</dbReference>
<dbReference type="InterPro" id="IPR043502">
    <property type="entry name" value="DNA/RNA_pol_sf"/>
</dbReference>
<dbReference type="InterPro" id="IPR036775">
    <property type="entry name" value="DNA_pol_Y-fam_lit_finger_sf"/>
</dbReference>
<dbReference type="InterPro" id="IPR017961">
    <property type="entry name" value="DNA_pol_Y-fam_little_finger"/>
</dbReference>
<dbReference type="InterPro" id="IPR050116">
    <property type="entry name" value="DNA_polymerase-Y"/>
</dbReference>
<dbReference type="InterPro" id="IPR022880">
    <property type="entry name" value="DNApol_IV"/>
</dbReference>
<dbReference type="InterPro" id="IPR053848">
    <property type="entry name" value="IMS_HHH_1"/>
</dbReference>
<dbReference type="InterPro" id="IPR043128">
    <property type="entry name" value="Rev_trsase/Diguanyl_cyclase"/>
</dbReference>
<dbReference type="InterPro" id="IPR001126">
    <property type="entry name" value="UmuC"/>
</dbReference>
<dbReference type="NCBIfam" id="NF002677">
    <property type="entry name" value="PRK02406.1"/>
    <property type="match status" value="1"/>
</dbReference>
<dbReference type="PANTHER" id="PTHR11076:SF33">
    <property type="entry name" value="DNA POLYMERASE KAPPA"/>
    <property type="match status" value="1"/>
</dbReference>
<dbReference type="PANTHER" id="PTHR11076">
    <property type="entry name" value="DNA REPAIR POLYMERASE UMUC / TRANSFERASE FAMILY MEMBER"/>
    <property type="match status" value="1"/>
</dbReference>
<dbReference type="Pfam" id="PF00817">
    <property type="entry name" value="IMS"/>
    <property type="match status" value="1"/>
</dbReference>
<dbReference type="Pfam" id="PF11799">
    <property type="entry name" value="IMS_C"/>
    <property type="match status" value="1"/>
</dbReference>
<dbReference type="Pfam" id="PF21999">
    <property type="entry name" value="IMS_HHH_1"/>
    <property type="match status" value="1"/>
</dbReference>
<dbReference type="SUPFAM" id="SSF56672">
    <property type="entry name" value="DNA/RNA polymerases"/>
    <property type="match status" value="1"/>
</dbReference>
<dbReference type="SUPFAM" id="SSF100879">
    <property type="entry name" value="Lesion bypass DNA polymerase (Y-family), little finger domain"/>
    <property type="match status" value="1"/>
</dbReference>
<dbReference type="PROSITE" id="PS50173">
    <property type="entry name" value="UMUC"/>
    <property type="match status" value="1"/>
</dbReference>
<comment type="function">
    <text evidence="1">Poorly processive, error-prone DNA polymerase involved in untargeted mutagenesis. Copies undamaged DNA at stalled replication forks, which arise in vivo from mismatched or misaligned primer ends. These misaligned primers can be extended by PolIV. Exhibits no 3'-5' exonuclease (proofreading) activity. May be involved in translesional synthesis, in conjunction with the beta clamp from PolIII.</text>
</comment>
<comment type="catalytic activity">
    <reaction evidence="1">
        <text>DNA(n) + a 2'-deoxyribonucleoside 5'-triphosphate = DNA(n+1) + diphosphate</text>
        <dbReference type="Rhea" id="RHEA:22508"/>
        <dbReference type="Rhea" id="RHEA-COMP:17339"/>
        <dbReference type="Rhea" id="RHEA-COMP:17340"/>
        <dbReference type="ChEBI" id="CHEBI:33019"/>
        <dbReference type="ChEBI" id="CHEBI:61560"/>
        <dbReference type="ChEBI" id="CHEBI:173112"/>
        <dbReference type="EC" id="2.7.7.7"/>
    </reaction>
</comment>
<comment type="cofactor">
    <cofactor evidence="1">
        <name>Mg(2+)</name>
        <dbReference type="ChEBI" id="CHEBI:18420"/>
    </cofactor>
    <text evidence="1">Binds 2 magnesium ions per subunit.</text>
</comment>
<comment type="subunit">
    <text evidence="1">Monomer.</text>
</comment>
<comment type="subcellular location">
    <subcellularLocation>
        <location evidence="1">Cytoplasm</location>
    </subcellularLocation>
</comment>
<comment type="similarity">
    <text evidence="1">Belongs to the DNA polymerase type-Y family.</text>
</comment>
<sequence>MRKIIHIDCDCFYAALEMRDDPSLRGKALAVGGSPDKRGVVATCSYEARAYGVRSAMAMRTALKLCPDLLVVRPRFDVYRAVSKQIHAIFRDYTDLIEPLSLDEAYLDVSASPHFAGSATRIAQDIRRRVAEELHITVSAGVAPNKFLAKIASDWRKPDGLFVITPEQVDGFVAELPVAKLHGVGKVTAERLARMGIRTCADLRQGSKLSLVREFGSFGERLWGLAHGIDERPVEVDSRRQSVSVECTFDRDLPDLAACLEELPTLLEELDGRLQRLDGSYRPDKPFVKLKFHDFTQTTVEQSGAGRDLESYRQLLGQAFARGNRPVRLIGVGVRLLDLQGAHEQLRLF</sequence>